<proteinExistence type="inferred from homology"/>
<comment type="function">
    <text evidence="1">Converts the preformed base xanthine, a product of nucleic acid breakdown, to xanthosine 5'-monophosphate (XMP), so it can be reused for RNA or DNA synthesis.</text>
</comment>
<comment type="catalytic activity">
    <reaction evidence="1">
        <text>XMP + diphosphate = xanthine + 5-phospho-alpha-D-ribose 1-diphosphate</text>
        <dbReference type="Rhea" id="RHEA:10800"/>
        <dbReference type="ChEBI" id="CHEBI:17712"/>
        <dbReference type="ChEBI" id="CHEBI:33019"/>
        <dbReference type="ChEBI" id="CHEBI:57464"/>
        <dbReference type="ChEBI" id="CHEBI:58017"/>
        <dbReference type="EC" id="2.4.2.22"/>
    </reaction>
</comment>
<comment type="pathway">
    <text evidence="1">Purine metabolism; XMP biosynthesis via salvage pathway; XMP from xanthine: step 1/1.</text>
</comment>
<comment type="subunit">
    <text evidence="1">Homodimer.</text>
</comment>
<comment type="subcellular location">
    <subcellularLocation>
        <location evidence="1">Cytoplasm</location>
    </subcellularLocation>
</comment>
<comment type="similarity">
    <text evidence="1">Belongs to the purine/pyrimidine phosphoribosyltransferase family. Xpt subfamily.</text>
</comment>
<evidence type="ECO:0000255" key="1">
    <source>
        <dbReference type="HAMAP-Rule" id="MF_01184"/>
    </source>
</evidence>
<reference key="1">
    <citation type="journal article" date="2004" name="Proc. Natl. Acad. Sci. U.S.A.">
        <title>The genome sequence of the probiotic intestinal bacterium Lactobacillus johnsonii NCC 533.</title>
        <authorList>
            <person name="Pridmore R.D."/>
            <person name="Berger B."/>
            <person name="Desiere F."/>
            <person name="Vilanova D."/>
            <person name="Barretto C."/>
            <person name="Pittet A.-C."/>
            <person name="Zwahlen M.-C."/>
            <person name="Rouvet M."/>
            <person name="Altermann E."/>
            <person name="Barrangou R."/>
            <person name="Mollet B."/>
            <person name="Mercenier A."/>
            <person name="Klaenhammer T."/>
            <person name="Arigoni F."/>
            <person name="Schell M.A."/>
        </authorList>
    </citation>
    <scope>NUCLEOTIDE SEQUENCE [LARGE SCALE GENOMIC DNA]</scope>
    <source>
        <strain>CNCM I-1225 / La1 / NCC 533</strain>
    </source>
</reference>
<feature type="chain" id="PRO_0000339708" description="Xanthine phosphoribosyltransferase">
    <location>
        <begin position="1"/>
        <end position="192"/>
    </location>
</feature>
<feature type="binding site" evidence="1">
    <location>
        <position position="20"/>
    </location>
    <ligand>
        <name>xanthine</name>
        <dbReference type="ChEBI" id="CHEBI:17712"/>
    </ligand>
</feature>
<feature type="binding site" evidence="1">
    <location>
        <position position="27"/>
    </location>
    <ligand>
        <name>xanthine</name>
        <dbReference type="ChEBI" id="CHEBI:17712"/>
    </ligand>
</feature>
<feature type="binding site" evidence="1">
    <location>
        <begin position="128"/>
        <end position="132"/>
    </location>
    <ligand>
        <name>5-phospho-alpha-D-ribose 1-diphosphate</name>
        <dbReference type="ChEBI" id="CHEBI:58017"/>
    </ligand>
</feature>
<feature type="binding site" evidence="1">
    <location>
        <position position="156"/>
    </location>
    <ligand>
        <name>xanthine</name>
        <dbReference type="ChEBI" id="CHEBI:17712"/>
    </ligand>
</feature>
<dbReference type="EC" id="2.4.2.22" evidence="1"/>
<dbReference type="EMBL" id="AE017198">
    <property type="protein sequence ID" value="AAS08208.1"/>
    <property type="molecule type" value="Genomic_DNA"/>
</dbReference>
<dbReference type="RefSeq" id="WP_011161417.1">
    <property type="nucleotide sequence ID" value="NC_005362.1"/>
</dbReference>
<dbReference type="SMR" id="Q74LF9"/>
<dbReference type="KEGG" id="ljo:LJ_0227"/>
<dbReference type="PATRIC" id="fig|257314.6.peg.238"/>
<dbReference type="eggNOG" id="COG0503">
    <property type="taxonomic scope" value="Bacteria"/>
</dbReference>
<dbReference type="HOGENOM" id="CLU_099015_0_0_9"/>
<dbReference type="UniPathway" id="UPA00602">
    <property type="reaction ID" value="UER00658"/>
</dbReference>
<dbReference type="Proteomes" id="UP000000581">
    <property type="component" value="Chromosome"/>
</dbReference>
<dbReference type="GO" id="GO:0005737">
    <property type="term" value="C:cytoplasm"/>
    <property type="evidence" value="ECO:0007669"/>
    <property type="project" value="UniProtKB-SubCell"/>
</dbReference>
<dbReference type="GO" id="GO:0000310">
    <property type="term" value="F:xanthine phosphoribosyltransferase activity"/>
    <property type="evidence" value="ECO:0007669"/>
    <property type="project" value="UniProtKB-UniRule"/>
</dbReference>
<dbReference type="GO" id="GO:0006166">
    <property type="term" value="P:purine ribonucleoside salvage"/>
    <property type="evidence" value="ECO:0007669"/>
    <property type="project" value="UniProtKB-KW"/>
</dbReference>
<dbReference type="GO" id="GO:0046110">
    <property type="term" value="P:xanthine metabolic process"/>
    <property type="evidence" value="ECO:0007669"/>
    <property type="project" value="InterPro"/>
</dbReference>
<dbReference type="GO" id="GO:0032265">
    <property type="term" value="P:XMP salvage"/>
    <property type="evidence" value="ECO:0007669"/>
    <property type="project" value="UniProtKB-UniRule"/>
</dbReference>
<dbReference type="CDD" id="cd06223">
    <property type="entry name" value="PRTases_typeI"/>
    <property type="match status" value="1"/>
</dbReference>
<dbReference type="Gene3D" id="3.40.50.2020">
    <property type="match status" value="1"/>
</dbReference>
<dbReference type="HAMAP" id="MF_01184">
    <property type="entry name" value="XPRTase"/>
    <property type="match status" value="1"/>
</dbReference>
<dbReference type="InterPro" id="IPR000836">
    <property type="entry name" value="PRibTrfase_dom"/>
</dbReference>
<dbReference type="InterPro" id="IPR029057">
    <property type="entry name" value="PRTase-like"/>
</dbReference>
<dbReference type="InterPro" id="IPR050118">
    <property type="entry name" value="Pur/Pyrimidine_PRTase"/>
</dbReference>
<dbReference type="InterPro" id="IPR010079">
    <property type="entry name" value="Xanthine_PRibTrfase"/>
</dbReference>
<dbReference type="NCBIfam" id="NF006671">
    <property type="entry name" value="PRK09219.1"/>
    <property type="match status" value="1"/>
</dbReference>
<dbReference type="NCBIfam" id="TIGR01744">
    <property type="entry name" value="XPRTase"/>
    <property type="match status" value="1"/>
</dbReference>
<dbReference type="PANTHER" id="PTHR43864">
    <property type="entry name" value="HYPOXANTHINE/GUANINE PHOSPHORIBOSYLTRANSFERASE"/>
    <property type="match status" value="1"/>
</dbReference>
<dbReference type="PANTHER" id="PTHR43864:SF1">
    <property type="entry name" value="XANTHINE PHOSPHORIBOSYLTRANSFERASE"/>
    <property type="match status" value="1"/>
</dbReference>
<dbReference type="Pfam" id="PF00156">
    <property type="entry name" value="Pribosyltran"/>
    <property type="match status" value="1"/>
</dbReference>
<dbReference type="SUPFAM" id="SSF53271">
    <property type="entry name" value="PRTase-like"/>
    <property type="match status" value="1"/>
</dbReference>
<name>XPT_LACJO</name>
<sequence length="192" mass="21405">MKLLEERIRKDGEVLDGNVLKINSFLNHQVDPQLMMEVGKEFKRLFENEKITKVLTCEASGIAPGIMAAYQLGVPMVFARKKKPSTLNDAVYWADVFSYTKKVNNKICVEKKFLSSDDHLLIIDDFLAHGEAVKGMLNIADQANATVAGVGVVVAKEFQGGSEWVKDHGYSLEALARISDFENNQVHFVGEE</sequence>
<gene>
    <name evidence="1" type="primary">xpt</name>
    <name type="ordered locus">LJ_0227</name>
</gene>
<keyword id="KW-0963">Cytoplasm</keyword>
<keyword id="KW-0328">Glycosyltransferase</keyword>
<keyword id="KW-0660">Purine salvage</keyword>
<keyword id="KW-0808">Transferase</keyword>
<organism>
    <name type="scientific">Lactobacillus johnsonii (strain CNCM I-12250 / La1 / NCC 533)</name>
    <dbReference type="NCBI Taxonomy" id="257314"/>
    <lineage>
        <taxon>Bacteria</taxon>
        <taxon>Bacillati</taxon>
        <taxon>Bacillota</taxon>
        <taxon>Bacilli</taxon>
        <taxon>Lactobacillales</taxon>
        <taxon>Lactobacillaceae</taxon>
        <taxon>Lactobacillus</taxon>
    </lineage>
</organism>
<accession>Q74LF9</accession>
<protein>
    <recommendedName>
        <fullName evidence="1">Xanthine phosphoribosyltransferase</fullName>
        <shortName evidence="1">XPRTase</shortName>
        <ecNumber evidence="1">2.4.2.22</ecNumber>
    </recommendedName>
</protein>